<evidence type="ECO:0000256" key="1">
    <source>
        <dbReference type="SAM" id="MobiDB-lite"/>
    </source>
</evidence>
<evidence type="ECO:0000269" key="2">
    <source>
    </source>
</evidence>
<evidence type="ECO:0000269" key="3">
    <source>
    </source>
</evidence>
<evidence type="ECO:0000269" key="4">
    <source>
    </source>
</evidence>
<evidence type="ECO:0000269" key="5">
    <source>
    </source>
</evidence>
<evidence type="ECO:0007829" key="6">
    <source>
        <dbReference type="PDB" id="6Y20"/>
    </source>
</evidence>
<comment type="function">
    <text evidence="2 3 4 5">Involved in determining which thoracic imaginal disk cells will form wings and halteres, perhaps by interacting with other nuclear regulatory proteins. When in combination with scalloped (sd), it acts as a transcriptional activation complex that regulates gene expression in the wing. Binding to sd switches the DNA target selectivity of sd. Required and sufficient for cell proliferation at the dorsal/ventral (D/V) boundary of the wing imaginal disk. Also required for cell proliferation in the wing imaginal disk, mediated via activation of E2f. By interacting with Dhfr, may control genes involved in DNA replication.</text>
</comment>
<comment type="subunit">
    <text evidence="2 4 5">The Ser-rich protein domain within the C-terminal region interacts with the C-terminus of sd to form a complex which acts as a selector for wing development. Interacts with Dhfr.</text>
</comment>
<comment type="interaction">
    <interactant intactId="EBI-162687">
        <id>Q26366</id>
    </interactant>
    <interactant intactId="EBI-151228">
        <id>P30052</id>
        <label>sd</label>
    </interactant>
    <organismsDiffer>false</organismsDiffer>
    <experiments>7</experiments>
</comment>
<comment type="interaction">
    <interactant intactId="EBI-162687">
        <id>Q26366</id>
    </interactant>
    <interactant intactId="EBI-529156">
        <id>P28347</id>
        <label>TEAD1</label>
    </interactant>
    <organismsDiffer>true</organismsDiffer>
    <experiments>3</experiments>
</comment>
<comment type="subcellular location">
    <subcellularLocation>
        <location>Nucleus</location>
    </subcellularLocation>
</comment>
<comment type="tissue specificity">
    <text evidence="4 5">Expressed in the developing wing primordia initially along the D/V wing boundary, and by the late third larval instar, maximal expression is seen in cells at the D/V wing disk boundary. Less expression is seen in cells located farther from this boundary.</text>
</comment>
<comment type="miscellaneous">
    <text>Loss of vestigial function selectively eliminates wing and haltere formation.</text>
</comment>
<gene>
    <name type="primary">vg</name>
    <name type="ORF">CG3830</name>
</gene>
<reference key="1">
    <citation type="journal article" date="1991" name="Genes Dev.">
        <title>Control of Drosophila wing and haltere development by the nuclear vestigial gene product.</title>
        <authorList>
            <person name="Williams J.A."/>
            <person name="Bell J.B."/>
            <person name="Carroll S.B."/>
        </authorList>
    </citation>
    <scope>NUCLEOTIDE SEQUENCE</scope>
    <scope>FUNCTION</scope>
</reference>
<reference key="2">
    <citation type="journal article" date="2000" name="Science">
        <title>The genome sequence of Drosophila melanogaster.</title>
        <authorList>
            <person name="Adams M.D."/>
            <person name="Celniker S.E."/>
            <person name="Holt R.A."/>
            <person name="Evans C.A."/>
            <person name="Gocayne J.D."/>
            <person name="Amanatides P.G."/>
            <person name="Scherer S.E."/>
            <person name="Li P.W."/>
            <person name="Hoskins R.A."/>
            <person name="Galle R.F."/>
            <person name="George R.A."/>
            <person name="Lewis S.E."/>
            <person name="Richards S."/>
            <person name="Ashburner M."/>
            <person name="Henderson S.N."/>
            <person name="Sutton G.G."/>
            <person name="Wortman J.R."/>
            <person name="Yandell M.D."/>
            <person name="Zhang Q."/>
            <person name="Chen L.X."/>
            <person name="Brandon R.C."/>
            <person name="Rogers Y.-H.C."/>
            <person name="Blazej R.G."/>
            <person name="Champe M."/>
            <person name="Pfeiffer B.D."/>
            <person name="Wan K.H."/>
            <person name="Doyle C."/>
            <person name="Baxter E.G."/>
            <person name="Helt G."/>
            <person name="Nelson C.R."/>
            <person name="Miklos G.L.G."/>
            <person name="Abril J.F."/>
            <person name="Agbayani A."/>
            <person name="An H.-J."/>
            <person name="Andrews-Pfannkoch C."/>
            <person name="Baldwin D."/>
            <person name="Ballew R.M."/>
            <person name="Basu A."/>
            <person name="Baxendale J."/>
            <person name="Bayraktaroglu L."/>
            <person name="Beasley E.M."/>
            <person name="Beeson K.Y."/>
            <person name="Benos P.V."/>
            <person name="Berman B.P."/>
            <person name="Bhandari D."/>
            <person name="Bolshakov S."/>
            <person name="Borkova D."/>
            <person name="Botchan M.R."/>
            <person name="Bouck J."/>
            <person name="Brokstein P."/>
            <person name="Brottier P."/>
            <person name="Burtis K.C."/>
            <person name="Busam D.A."/>
            <person name="Butler H."/>
            <person name="Cadieu E."/>
            <person name="Center A."/>
            <person name="Chandra I."/>
            <person name="Cherry J.M."/>
            <person name="Cawley S."/>
            <person name="Dahlke C."/>
            <person name="Davenport L.B."/>
            <person name="Davies P."/>
            <person name="de Pablos B."/>
            <person name="Delcher A."/>
            <person name="Deng Z."/>
            <person name="Mays A.D."/>
            <person name="Dew I."/>
            <person name="Dietz S.M."/>
            <person name="Dodson K."/>
            <person name="Doup L.E."/>
            <person name="Downes M."/>
            <person name="Dugan-Rocha S."/>
            <person name="Dunkov B.C."/>
            <person name="Dunn P."/>
            <person name="Durbin K.J."/>
            <person name="Evangelista C.C."/>
            <person name="Ferraz C."/>
            <person name="Ferriera S."/>
            <person name="Fleischmann W."/>
            <person name="Fosler C."/>
            <person name="Gabrielian A.E."/>
            <person name="Garg N.S."/>
            <person name="Gelbart W.M."/>
            <person name="Glasser K."/>
            <person name="Glodek A."/>
            <person name="Gong F."/>
            <person name="Gorrell J.H."/>
            <person name="Gu Z."/>
            <person name="Guan P."/>
            <person name="Harris M."/>
            <person name="Harris N.L."/>
            <person name="Harvey D.A."/>
            <person name="Heiman T.J."/>
            <person name="Hernandez J.R."/>
            <person name="Houck J."/>
            <person name="Hostin D."/>
            <person name="Houston K.A."/>
            <person name="Howland T.J."/>
            <person name="Wei M.-H."/>
            <person name="Ibegwam C."/>
            <person name="Jalali M."/>
            <person name="Kalush F."/>
            <person name="Karpen G.H."/>
            <person name="Ke Z."/>
            <person name="Kennison J.A."/>
            <person name="Ketchum K.A."/>
            <person name="Kimmel B.E."/>
            <person name="Kodira C.D."/>
            <person name="Kraft C.L."/>
            <person name="Kravitz S."/>
            <person name="Kulp D."/>
            <person name="Lai Z."/>
            <person name="Lasko P."/>
            <person name="Lei Y."/>
            <person name="Levitsky A.A."/>
            <person name="Li J.H."/>
            <person name="Li Z."/>
            <person name="Liang Y."/>
            <person name="Lin X."/>
            <person name="Liu X."/>
            <person name="Mattei B."/>
            <person name="McIntosh T.C."/>
            <person name="McLeod M.P."/>
            <person name="McPherson D."/>
            <person name="Merkulov G."/>
            <person name="Milshina N.V."/>
            <person name="Mobarry C."/>
            <person name="Morris J."/>
            <person name="Moshrefi A."/>
            <person name="Mount S.M."/>
            <person name="Moy M."/>
            <person name="Murphy B."/>
            <person name="Murphy L."/>
            <person name="Muzny D.M."/>
            <person name="Nelson D.L."/>
            <person name="Nelson D.R."/>
            <person name="Nelson K.A."/>
            <person name="Nixon K."/>
            <person name="Nusskern D.R."/>
            <person name="Pacleb J.M."/>
            <person name="Palazzolo M."/>
            <person name="Pittman G.S."/>
            <person name="Pan S."/>
            <person name="Pollard J."/>
            <person name="Puri V."/>
            <person name="Reese M.G."/>
            <person name="Reinert K."/>
            <person name="Remington K."/>
            <person name="Saunders R.D.C."/>
            <person name="Scheeler F."/>
            <person name="Shen H."/>
            <person name="Shue B.C."/>
            <person name="Siden-Kiamos I."/>
            <person name="Simpson M."/>
            <person name="Skupski M.P."/>
            <person name="Smith T.J."/>
            <person name="Spier E."/>
            <person name="Spradling A.C."/>
            <person name="Stapleton M."/>
            <person name="Strong R."/>
            <person name="Sun E."/>
            <person name="Svirskas R."/>
            <person name="Tector C."/>
            <person name="Turner R."/>
            <person name="Venter E."/>
            <person name="Wang A.H."/>
            <person name="Wang X."/>
            <person name="Wang Z.-Y."/>
            <person name="Wassarman D.A."/>
            <person name="Weinstock G.M."/>
            <person name="Weissenbach J."/>
            <person name="Williams S.M."/>
            <person name="Woodage T."/>
            <person name="Worley K.C."/>
            <person name="Wu D."/>
            <person name="Yang S."/>
            <person name="Yao Q.A."/>
            <person name="Ye J."/>
            <person name="Yeh R.-F."/>
            <person name="Zaveri J.S."/>
            <person name="Zhan M."/>
            <person name="Zhang G."/>
            <person name="Zhao Q."/>
            <person name="Zheng L."/>
            <person name="Zheng X.H."/>
            <person name="Zhong F.N."/>
            <person name="Zhong W."/>
            <person name="Zhou X."/>
            <person name="Zhu S.C."/>
            <person name="Zhu X."/>
            <person name="Smith H.O."/>
            <person name="Gibbs R.A."/>
            <person name="Myers E.W."/>
            <person name="Rubin G.M."/>
            <person name="Venter J.C."/>
        </authorList>
    </citation>
    <scope>NUCLEOTIDE SEQUENCE [LARGE SCALE GENOMIC DNA]</scope>
    <source>
        <strain>Berkeley</strain>
    </source>
</reference>
<reference key="3">
    <citation type="journal article" date="2002" name="Genome Biol.">
        <title>Annotation of the Drosophila melanogaster euchromatic genome: a systematic review.</title>
        <authorList>
            <person name="Misra S."/>
            <person name="Crosby M.A."/>
            <person name="Mungall C.J."/>
            <person name="Matthews B.B."/>
            <person name="Campbell K.S."/>
            <person name="Hradecky P."/>
            <person name="Huang Y."/>
            <person name="Kaminker J.S."/>
            <person name="Millburn G.H."/>
            <person name="Prochnik S.E."/>
            <person name="Smith C.D."/>
            <person name="Tupy J.L."/>
            <person name="Whitfield E.J."/>
            <person name="Bayraktaroglu L."/>
            <person name="Berman B.P."/>
            <person name="Bettencourt B.R."/>
            <person name="Celniker S.E."/>
            <person name="de Grey A.D.N.J."/>
            <person name="Drysdale R.A."/>
            <person name="Harris N.L."/>
            <person name="Richter J."/>
            <person name="Russo S."/>
            <person name="Schroeder A.J."/>
            <person name="Shu S.Q."/>
            <person name="Stapleton M."/>
            <person name="Yamada C."/>
            <person name="Ashburner M."/>
            <person name="Gelbart W.M."/>
            <person name="Rubin G.M."/>
            <person name="Lewis S.E."/>
        </authorList>
    </citation>
    <scope>GENOME REANNOTATION</scope>
    <source>
        <strain>Berkeley</strain>
    </source>
</reference>
<reference key="4">
    <citation type="journal article" date="1998" name="Genes Dev.">
        <title>Molecular interactions between Vestigial and Scalloped promote wing formation in Drosophila.</title>
        <authorList>
            <person name="Simmonds A.J."/>
            <person name="Liu X."/>
            <person name="Soanes K.H."/>
            <person name="Krause H.M."/>
            <person name="Irvine K.D."/>
            <person name="Bell J.B."/>
        </authorList>
    </citation>
    <scope>FUNCTION</scope>
    <scope>INTERACTION WITH SD</scope>
    <scope>TISSUE SPECIFICITY</scope>
</reference>
<reference key="5">
    <citation type="journal article" date="1998" name="Genes Dev.">
        <title>The Vestigial and Scalloped proteins act together to directly regulate wing-specific gene expression in Drosophila.</title>
        <authorList>
            <person name="Halder G."/>
            <person name="Polaczyk P."/>
            <person name="Kraus M.E."/>
            <person name="Hudson A."/>
            <person name="Kim J."/>
            <person name="Laughon A."/>
            <person name="Carroll S.B."/>
        </authorList>
    </citation>
    <scope>FUNCTION</scope>
    <scope>INTERACTION WITH SD</scope>
    <scope>TISSUE SPECIFICITY</scope>
</reference>
<reference key="6">
    <citation type="journal article" date="2001" name="Development">
        <title>Binding of the vestigial co-factor switches the DNA-target selectivity of the scalloped selector protein.</title>
        <authorList>
            <person name="Halder G."/>
            <person name="Carroll S.B."/>
        </authorList>
    </citation>
    <scope>DNA-BINDING OF VG-SD COMPLEX</scope>
</reference>
<reference key="7">
    <citation type="journal article" date="2004" name="Cell Death Differ.">
        <title>The Drosophila wing differentiation factor vestigial-scalloped is required for cell proliferation and cell survival at the dorso-ventral boundary of the wing imaginal disc.</title>
        <authorList>
            <person name="Delanoue R."/>
            <person name="Legent K."/>
            <person name="Godefroy N."/>
            <person name="Flagiello D."/>
            <person name="Dutriaux A."/>
            <person name="Vaudin P."/>
            <person name="Becker J.L."/>
            <person name="Silber J."/>
        </authorList>
    </citation>
    <scope>FUNCTION</scope>
    <scope>INTERACTION WITH SD AND DHFR</scope>
</reference>
<accession>Q26366</accession>
<accession>Q9V6H9</accession>
<name>VG_DROME</name>
<feature type="chain" id="PRO_0000065807" description="Protein vestigial">
    <location>
        <begin position="1"/>
        <end position="453"/>
    </location>
</feature>
<feature type="region of interest" description="Disordered" evidence="1">
    <location>
        <begin position="145"/>
        <end position="279"/>
    </location>
</feature>
<feature type="region of interest" description="Ser-rich sd binding domain">
    <location>
        <begin position="279"/>
        <end position="335"/>
    </location>
</feature>
<feature type="compositionally biased region" description="Basic residues" evidence="1">
    <location>
        <begin position="151"/>
        <end position="177"/>
    </location>
</feature>
<feature type="compositionally biased region" description="Basic and acidic residues" evidence="1">
    <location>
        <begin position="178"/>
        <end position="193"/>
    </location>
</feature>
<feature type="compositionally biased region" description="Gly residues" evidence="1">
    <location>
        <begin position="227"/>
        <end position="253"/>
    </location>
</feature>
<feature type="compositionally biased region" description="Gly residues" evidence="1">
    <location>
        <begin position="267"/>
        <end position="278"/>
    </location>
</feature>
<feature type="helix" evidence="6">
    <location>
        <begin position="299"/>
        <end position="310"/>
    </location>
</feature>
<feature type="helix" evidence="6">
    <location>
        <begin position="324"/>
        <end position="326"/>
    </location>
</feature>
<feature type="helix" evidence="6">
    <location>
        <begin position="331"/>
        <end position="334"/>
    </location>
</feature>
<organism>
    <name type="scientific">Drosophila melanogaster</name>
    <name type="common">Fruit fly</name>
    <dbReference type="NCBI Taxonomy" id="7227"/>
    <lineage>
        <taxon>Eukaryota</taxon>
        <taxon>Metazoa</taxon>
        <taxon>Ecdysozoa</taxon>
        <taxon>Arthropoda</taxon>
        <taxon>Hexapoda</taxon>
        <taxon>Insecta</taxon>
        <taxon>Pterygota</taxon>
        <taxon>Neoptera</taxon>
        <taxon>Endopterygota</taxon>
        <taxon>Diptera</taxon>
        <taxon>Brachycera</taxon>
        <taxon>Muscomorpha</taxon>
        <taxon>Ephydroidea</taxon>
        <taxon>Drosophilidae</taxon>
        <taxon>Drosophila</taxon>
        <taxon>Sophophora</taxon>
    </lineage>
</organism>
<dbReference type="EMBL" id="S72379">
    <property type="protein sequence ID" value="AAB20671.1"/>
    <property type="molecule type" value="Unassigned_DNA"/>
</dbReference>
<dbReference type="EMBL" id="AE013599">
    <property type="protein sequence ID" value="AAF58444.1"/>
    <property type="molecule type" value="Genomic_DNA"/>
</dbReference>
<dbReference type="PIR" id="A41640">
    <property type="entry name" value="A41640"/>
</dbReference>
<dbReference type="RefSeq" id="NP_001401005.1">
    <property type="nucleotide sequence ID" value="NM_001414091.1"/>
</dbReference>
<dbReference type="RefSeq" id="NP_523723.1">
    <property type="nucleotide sequence ID" value="NM_078999.4"/>
</dbReference>
<dbReference type="PDB" id="6Y20">
    <property type="method" value="X-ray"/>
    <property type="resolution" value="1.85 A"/>
    <property type="chains" value="C/D=298-337"/>
</dbReference>
<dbReference type="PDBsum" id="6Y20"/>
<dbReference type="SMR" id="Q26366"/>
<dbReference type="BioGRID" id="62192">
    <property type="interactions" value="33"/>
</dbReference>
<dbReference type="FunCoup" id="Q26366">
    <property type="interactions" value="61"/>
</dbReference>
<dbReference type="IntAct" id="Q26366">
    <property type="interactions" value="2"/>
</dbReference>
<dbReference type="STRING" id="7227.FBpp0086898"/>
<dbReference type="PaxDb" id="7227-FBpp0086898"/>
<dbReference type="EnsemblMetazoa" id="FBtr0087785">
    <property type="protein sequence ID" value="FBpp0086898"/>
    <property type="gene ID" value="FBgn0003975"/>
</dbReference>
<dbReference type="EnsemblMetazoa" id="FBtr0481629">
    <property type="protein sequence ID" value="FBpp0428411"/>
    <property type="gene ID" value="FBgn0003975"/>
</dbReference>
<dbReference type="GeneID" id="36421"/>
<dbReference type="KEGG" id="dme:Dmel_CG3830"/>
<dbReference type="UCSC" id="CG3830-RA">
    <property type="organism name" value="d. melanogaster"/>
</dbReference>
<dbReference type="AGR" id="FB:FBgn0003975"/>
<dbReference type="CTD" id="36421"/>
<dbReference type="FlyBase" id="FBgn0003975">
    <property type="gene designation" value="vg"/>
</dbReference>
<dbReference type="VEuPathDB" id="VectorBase:FBgn0003975"/>
<dbReference type="eggNOG" id="ENOG502QS1A">
    <property type="taxonomic scope" value="Eukaryota"/>
</dbReference>
<dbReference type="GeneTree" id="ENSGT00530000063353"/>
<dbReference type="HOGENOM" id="CLU_661018_0_0_1"/>
<dbReference type="InParanoid" id="Q26366"/>
<dbReference type="OMA" id="HSTRLHH"/>
<dbReference type="OrthoDB" id="10069705at2759"/>
<dbReference type="PhylomeDB" id="Q26366"/>
<dbReference type="SignaLink" id="Q26366"/>
<dbReference type="BioGRID-ORCS" id="36421">
    <property type="hits" value="0 hits in 3 CRISPR screens"/>
</dbReference>
<dbReference type="GenomeRNAi" id="36421"/>
<dbReference type="PRO" id="PR:Q26366"/>
<dbReference type="Proteomes" id="UP000000803">
    <property type="component" value="Chromosome 2R"/>
</dbReference>
<dbReference type="Bgee" id="FBgn0003975">
    <property type="expression patterns" value="Expressed in indirect flight muscle cell (Drosophila) in post-embryonic organism and 46 other cell types or tissues"/>
</dbReference>
<dbReference type="GO" id="GO:0005634">
    <property type="term" value="C:nucleus"/>
    <property type="evidence" value="ECO:0000314"/>
    <property type="project" value="UniProtKB"/>
</dbReference>
<dbReference type="GO" id="GO:0003677">
    <property type="term" value="F:DNA binding"/>
    <property type="evidence" value="ECO:0007669"/>
    <property type="project" value="UniProtKB-KW"/>
</dbReference>
<dbReference type="GO" id="GO:0003713">
    <property type="term" value="F:transcription coactivator activity"/>
    <property type="evidence" value="ECO:0000314"/>
    <property type="project" value="FlyBase"/>
</dbReference>
<dbReference type="GO" id="GO:0090254">
    <property type="term" value="P:cell elongation involved in imaginal disc-derived wing morphogenesis"/>
    <property type="evidence" value="ECO:0000315"/>
    <property type="project" value="FlyBase"/>
</dbReference>
<dbReference type="GO" id="GO:0001745">
    <property type="term" value="P:compound eye morphogenesis"/>
    <property type="evidence" value="ECO:0000315"/>
    <property type="project" value="FlyBase"/>
</dbReference>
<dbReference type="GO" id="GO:0016204">
    <property type="term" value="P:determination of muscle attachment site"/>
    <property type="evidence" value="ECO:0000315"/>
    <property type="project" value="FlyBase"/>
</dbReference>
<dbReference type="GO" id="GO:0006260">
    <property type="term" value="P:DNA replication"/>
    <property type="evidence" value="ECO:0007669"/>
    <property type="project" value="UniProtKB-KW"/>
</dbReference>
<dbReference type="GO" id="GO:0007451">
    <property type="term" value="P:dorsal/ventral lineage restriction, imaginal disc"/>
    <property type="evidence" value="ECO:0000315"/>
    <property type="project" value="FlyBase"/>
</dbReference>
<dbReference type="GO" id="GO:0007482">
    <property type="term" value="P:haltere development"/>
    <property type="evidence" value="ECO:0000315"/>
    <property type="project" value="FlyBase"/>
</dbReference>
<dbReference type="GO" id="GO:0007480">
    <property type="term" value="P:imaginal disc-derived leg morphogenesis"/>
    <property type="evidence" value="ECO:0000315"/>
    <property type="project" value="FlyBase"/>
</dbReference>
<dbReference type="GO" id="GO:0007476">
    <property type="term" value="P:imaginal disc-derived wing morphogenesis"/>
    <property type="evidence" value="ECO:0000314"/>
    <property type="project" value="UniProtKB"/>
</dbReference>
<dbReference type="GO" id="GO:0045944">
    <property type="term" value="P:positive regulation of transcription by RNA polymerase II"/>
    <property type="evidence" value="ECO:0000315"/>
    <property type="project" value="FlyBase"/>
</dbReference>
<dbReference type="GO" id="GO:0042127">
    <property type="term" value="P:regulation of cell population proliferation"/>
    <property type="evidence" value="ECO:0000315"/>
    <property type="project" value="FlyBase"/>
</dbReference>
<dbReference type="GO" id="GO:0007346">
    <property type="term" value="P:regulation of mitotic cell cycle"/>
    <property type="evidence" value="ECO:0000315"/>
    <property type="project" value="FlyBase"/>
</dbReference>
<dbReference type="GO" id="GO:0006357">
    <property type="term" value="P:regulation of transcription by RNA polymerase II"/>
    <property type="evidence" value="ECO:0000318"/>
    <property type="project" value="GO_Central"/>
</dbReference>
<dbReference type="GO" id="GO:0007525">
    <property type="term" value="P:somatic muscle development"/>
    <property type="evidence" value="ECO:0000315"/>
    <property type="project" value="FlyBase"/>
</dbReference>
<dbReference type="GO" id="GO:0035220">
    <property type="term" value="P:wing disc development"/>
    <property type="evidence" value="ECO:0000315"/>
    <property type="project" value="FlyBase"/>
</dbReference>
<dbReference type="GO" id="GO:0048190">
    <property type="term" value="P:wing disc dorsal/ventral pattern formation"/>
    <property type="evidence" value="ECO:0000315"/>
    <property type="project" value="FlyBase"/>
</dbReference>
<dbReference type="GO" id="GO:0007472">
    <property type="term" value="P:wing disc morphogenesis"/>
    <property type="evidence" value="ECO:0000315"/>
    <property type="project" value="FlyBase"/>
</dbReference>
<dbReference type="GO" id="GO:0007473">
    <property type="term" value="P:wing disc proximal/distal pattern formation"/>
    <property type="evidence" value="ECO:0000315"/>
    <property type="project" value="FlyBase"/>
</dbReference>
<dbReference type="InterPro" id="IPR006627">
    <property type="entry name" value="TDU_repeat"/>
</dbReference>
<dbReference type="InterPro" id="IPR011520">
    <property type="entry name" value="Vg_fam"/>
</dbReference>
<dbReference type="PANTHER" id="PTHR15950:SF15">
    <property type="entry name" value="PROTEIN VESTIGIAL"/>
    <property type="match status" value="1"/>
</dbReference>
<dbReference type="PANTHER" id="PTHR15950">
    <property type="entry name" value="TRANSCRIPTION COFACTOR VESTIGIAL-LIKE PROTEIN"/>
    <property type="match status" value="1"/>
</dbReference>
<dbReference type="Pfam" id="PF07545">
    <property type="entry name" value="Vg_Tdu"/>
    <property type="match status" value="1"/>
</dbReference>
<dbReference type="SMART" id="SM00711">
    <property type="entry name" value="TDU"/>
    <property type="match status" value="1"/>
</dbReference>
<proteinExistence type="evidence at protein level"/>
<protein>
    <recommendedName>
        <fullName>Protein vestigial</fullName>
    </recommendedName>
</protein>
<keyword id="KW-0002">3D-structure</keyword>
<keyword id="KW-0010">Activator</keyword>
<keyword id="KW-0131">Cell cycle</keyword>
<keyword id="KW-0217">Developmental protein</keyword>
<keyword id="KW-0235">DNA replication</keyword>
<keyword id="KW-0238">DNA-binding</keyword>
<keyword id="KW-0539">Nucleus</keyword>
<keyword id="KW-1185">Reference proteome</keyword>
<keyword id="KW-0804">Transcription</keyword>
<keyword id="KW-0805">Transcription regulation</keyword>
<sequence length="453" mass="46327">MAVSCPEVMYGAYYPYLYGRAGTSRSFYQYERFNQDLYSSSGVNLAASSSASGSSHSPCSPILPPSVSANAAAAVAAAAHNSAAAAVAVAANQASSSGGIGGGGLGGLGGLGGGPASGLLGSNVVPGSSSVGSVGLGMSPVLSGAAGHSLHSSHRTHAHSLAHAHTHPHSHTHTHTHQTKEEDLIVPRSEAEARLVGSQQHQHHNESSCSSGPDSPRHAHSHSHPLHGGGGATGGPSSAGGTGSGGGDGGGTGAIPKNLPALETPMGSGGGGLAGSGQGQAQYLSASCVVFTNYSGDTASQVDEHFSRALNYNNKDSKESSSPMSNRNFPPSFWNSNYVHPIPAPTHHQVSDLYGTATDTGYATDPWVPHAAHYGSYAHAAHAHAAHAHAYHHNMAQYGSLLRLPQQYASHGSRLHHDQQTAHALEYSSYPTMAGLEAQVAQVQESSKDLYWF</sequence>